<evidence type="ECO:0000255" key="1">
    <source>
        <dbReference type="HAMAP-Rule" id="MF_00318"/>
    </source>
</evidence>
<reference key="1">
    <citation type="journal article" date="2006" name="PLoS Genet.">
        <title>Secrets of soil survival revealed by the genome sequence of Arthrobacter aurescens TC1.</title>
        <authorList>
            <person name="Mongodin E.F."/>
            <person name="Shapir N."/>
            <person name="Daugherty S.C."/>
            <person name="DeBoy R.T."/>
            <person name="Emerson J.B."/>
            <person name="Shvartzbeyn A."/>
            <person name="Radune D."/>
            <person name="Vamathevan J."/>
            <person name="Riggs F."/>
            <person name="Grinberg V."/>
            <person name="Khouri H.M."/>
            <person name="Wackett L.P."/>
            <person name="Nelson K.E."/>
            <person name="Sadowsky M.J."/>
        </authorList>
    </citation>
    <scope>NUCLEOTIDE SEQUENCE [LARGE SCALE GENOMIC DNA]</scope>
    <source>
        <strain>TC1</strain>
    </source>
</reference>
<accession>A1R485</accession>
<sequence length="426" mass="45143">MALIDAIHAREILDSRGNPTVEVEVLLSDGQIGRAAVPSGASTGEHEAVELRDGDKGRYLGKGVQKAVDAVIDEISPALIGFDATDQRSIDQAMIDLDGTPNKGKLGANAILGVSLAVANAAAASADLPLYKYLGGPNAHVLPVPLMNILNGGSHADSDVDIQEFMIAPIGAETFSEGLRWGVEVYHNLKAVLQEKGLSTGLGDEGGFAPNLPSNRAALDLIQEAIKNAGYTPGTDIALALDVASSEFYKEGAYQFEGKALSATEMSAYYAELVADYPLVSIEDPLDENDWEGWKTLTDTIGDKVQLVGDDLFVTNPVRLQQGIETATANSLLVKVNQIGSLTETLDAVSLAQRSGYTTITSHRSGETEDTTIADIAVATNAGQIKTGAPARSERVAKYNQLLRIEEELDDAARYAGRSAFPRFKG</sequence>
<feature type="chain" id="PRO_1000019184" description="Enolase">
    <location>
        <begin position="1"/>
        <end position="426"/>
    </location>
</feature>
<feature type="active site" description="Proton donor" evidence="1">
    <location>
        <position position="205"/>
    </location>
</feature>
<feature type="active site" description="Proton acceptor" evidence="1">
    <location>
        <position position="335"/>
    </location>
</feature>
<feature type="binding site" evidence="1">
    <location>
        <position position="163"/>
    </location>
    <ligand>
        <name>(2R)-2-phosphoglycerate</name>
        <dbReference type="ChEBI" id="CHEBI:58289"/>
    </ligand>
</feature>
<feature type="binding site" evidence="1">
    <location>
        <position position="242"/>
    </location>
    <ligand>
        <name>Mg(2+)</name>
        <dbReference type="ChEBI" id="CHEBI:18420"/>
    </ligand>
</feature>
<feature type="binding site" evidence="1">
    <location>
        <position position="283"/>
    </location>
    <ligand>
        <name>Mg(2+)</name>
        <dbReference type="ChEBI" id="CHEBI:18420"/>
    </ligand>
</feature>
<feature type="binding site" evidence="1">
    <location>
        <position position="310"/>
    </location>
    <ligand>
        <name>Mg(2+)</name>
        <dbReference type="ChEBI" id="CHEBI:18420"/>
    </ligand>
</feature>
<feature type="binding site" evidence="1">
    <location>
        <position position="335"/>
    </location>
    <ligand>
        <name>(2R)-2-phosphoglycerate</name>
        <dbReference type="ChEBI" id="CHEBI:58289"/>
    </ligand>
</feature>
<feature type="binding site" evidence="1">
    <location>
        <position position="364"/>
    </location>
    <ligand>
        <name>(2R)-2-phosphoglycerate</name>
        <dbReference type="ChEBI" id="CHEBI:58289"/>
    </ligand>
</feature>
<feature type="binding site" evidence="1">
    <location>
        <position position="365"/>
    </location>
    <ligand>
        <name>(2R)-2-phosphoglycerate</name>
        <dbReference type="ChEBI" id="CHEBI:58289"/>
    </ligand>
</feature>
<feature type="binding site" evidence="1">
    <location>
        <position position="386"/>
    </location>
    <ligand>
        <name>(2R)-2-phosphoglycerate</name>
        <dbReference type="ChEBI" id="CHEBI:58289"/>
    </ligand>
</feature>
<comment type="function">
    <text evidence="1">Catalyzes the reversible conversion of 2-phosphoglycerate (2-PG) into phosphoenolpyruvate (PEP). It is essential for the degradation of carbohydrates via glycolysis.</text>
</comment>
<comment type="catalytic activity">
    <reaction evidence="1">
        <text>(2R)-2-phosphoglycerate = phosphoenolpyruvate + H2O</text>
        <dbReference type="Rhea" id="RHEA:10164"/>
        <dbReference type="ChEBI" id="CHEBI:15377"/>
        <dbReference type="ChEBI" id="CHEBI:58289"/>
        <dbReference type="ChEBI" id="CHEBI:58702"/>
        <dbReference type="EC" id="4.2.1.11"/>
    </reaction>
</comment>
<comment type="cofactor">
    <cofactor evidence="1">
        <name>Mg(2+)</name>
        <dbReference type="ChEBI" id="CHEBI:18420"/>
    </cofactor>
    <text evidence="1">Binds a second Mg(2+) ion via substrate during catalysis.</text>
</comment>
<comment type="pathway">
    <text evidence="1">Carbohydrate degradation; glycolysis; pyruvate from D-glyceraldehyde 3-phosphate: step 4/5.</text>
</comment>
<comment type="subcellular location">
    <subcellularLocation>
        <location evidence="1">Cytoplasm</location>
    </subcellularLocation>
    <subcellularLocation>
        <location evidence="1">Secreted</location>
    </subcellularLocation>
    <subcellularLocation>
        <location evidence="1">Cell surface</location>
    </subcellularLocation>
    <text evidence="1">Fractions of enolase are present in both the cytoplasm and on the cell surface.</text>
</comment>
<comment type="similarity">
    <text evidence="1">Belongs to the enolase family.</text>
</comment>
<proteinExistence type="inferred from homology"/>
<protein>
    <recommendedName>
        <fullName evidence="1">Enolase</fullName>
        <ecNumber evidence="1">4.2.1.11</ecNumber>
    </recommendedName>
    <alternativeName>
        <fullName evidence="1">2-phospho-D-glycerate hydro-lyase</fullName>
    </alternativeName>
    <alternativeName>
        <fullName evidence="1">2-phosphoglycerate dehydratase</fullName>
    </alternativeName>
</protein>
<gene>
    <name evidence="1" type="primary">eno</name>
    <name type="ordered locus">AAur_1263</name>
</gene>
<dbReference type="EC" id="4.2.1.11" evidence="1"/>
<dbReference type="EMBL" id="CP000474">
    <property type="protein sequence ID" value="ABM07223.1"/>
    <property type="molecule type" value="Genomic_DNA"/>
</dbReference>
<dbReference type="RefSeq" id="WP_011773994.1">
    <property type="nucleotide sequence ID" value="NC_008711.1"/>
</dbReference>
<dbReference type="SMR" id="A1R485"/>
<dbReference type="STRING" id="290340.AAur_1263"/>
<dbReference type="KEGG" id="aau:AAur_1263"/>
<dbReference type="eggNOG" id="COG0148">
    <property type="taxonomic scope" value="Bacteria"/>
</dbReference>
<dbReference type="HOGENOM" id="CLU_031223_2_1_11"/>
<dbReference type="OrthoDB" id="9804716at2"/>
<dbReference type="UniPathway" id="UPA00109">
    <property type="reaction ID" value="UER00187"/>
</dbReference>
<dbReference type="Proteomes" id="UP000000637">
    <property type="component" value="Chromosome"/>
</dbReference>
<dbReference type="GO" id="GO:0009986">
    <property type="term" value="C:cell surface"/>
    <property type="evidence" value="ECO:0007669"/>
    <property type="project" value="UniProtKB-SubCell"/>
</dbReference>
<dbReference type="GO" id="GO:0005576">
    <property type="term" value="C:extracellular region"/>
    <property type="evidence" value="ECO:0007669"/>
    <property type="project" value="UniProtKB-SubCell"/>
</dbReference>
<dbReference type="GO" id="GO:0000015">
    <property type="term" value="C:phosphopyruvate hydratase complex"/>
    <property type="evidence" value="ECO:0007669"/>
    <property type="project" value="InterPro"/>
</dbReference>
<dbReference type="GO" id="GO:0000287">
    <property type="term" value="F:magnesium ion binding"/>
    <property type="evidence" value="ECO:0007669"/>
    <property type="project" value="UniProtKB-UniRule"/>
</dbReference>
<dbReference type="GO" id="GO:0004634">
    <property type="term" value="F:phosphopyruvate hydratase activity"/>
    <property type="evidence" value="ECO:0007669"/>
    <property type="project" value="UniProtKB-UniRule"/>
</dbReference>
<dbReference type="GO" id="GO:0006096">
    <property type="term" value="P:glycolytic process"/>
    <property type="evidence" value="ECO:0007669"/>
    <property type="project" value="UniProtKB-UniRule"/>
</dbReference>
<dbReference type="CDD" id="cd03313">
    <property type="entry name" value="enolase"/>
    <property type="match status" value="1"/>
</dbReference>
<dbReference type="FunFam" id="3.20.20.120:FF:000001">
    <property type="entry name" value="Enolase"/>
    <property type="match status" value="1"/>
</dbReference>
<dbReference type="FunFam" id="3.30.390.10:FF:000001">
    <property type="entry name" value="Enolase"/>
    <property type="match status" value="1"/>
</dbReference>
<dbReference type="Gene3D" id="3.20.20.120">
    <property type="entry name" value="Enolase-like C-terminal domain"/>
    <property type="match status" value="1"/>
</dbReference>
<dbReference type="Gene3D" id="3.30.390.10">
    <property type="entry name" value="Enolase-like, N-terminal domain"/>
    <property type="match status" value="1"/>
</dbReference>
<dbReference type="HAMAP" id="MF_00318">
    <property type="entry name" value="Enolase"/>
    <property type="match status" value="1"/>
</dbReference>
<dbReference type="InterPro" id="IPR000941">
    <property type="entry name" value="Enolase"/>
</dbReference>
<dbReference type="InterPro" id="IPR036849">
    <property type="entry name" value="Enolase-like_C_sf"/>
</dbReference>
<dbReference type="InterPro" id="IPR029017">
    <property type="entry name" value="Enolase-like_N"/>
</dbReference>
<dbReference type="InterPro" id="IPR020810">
    <property type="entry name" value="Enolase_C"/>
</dbReference>
<dbReference type="InterPro" id="IPR020809">
    <property type="entry name" value="Enolase_CS"/>
</dbReference>
<dbReference type="InterPro" id="IPR020811">
    <property type="entry name" value="Enolase_N"/>
</dbReference>
<dbReference type="NCBIfam" id="TIGR01060">
    <property type="entry name" value="eno"/>
    <property type="match status" value="1"/>
</dbReference>
<dbReference type="PANTHER" id="PTHR11902">
    <property type="entry name" value="ENOLASE"/>
    <property type="match status" value="1"/>
</dbReference>
<dbReference type="PANTHER" id="PTHR11902:SF1">
    <property type="entry name" value="ENOLASE"/>
    <property type="match status" value="1"/>
</dbReference>
<dbReference type="Pfam" id="PF00113">
    <property type="entry name" value="Enolase_C"/>
    <property type="match status" value="1"/>
</dbReference>
<dbReference type="Pfam" id="PF03952">
    <property type="entry name" value="Enolase_N"/>
    <property type="match status" value="1"/>
</dbReference>
<dbReference type="PIRSF" id="PIRSF001400">
    <property type="entry name" value="Enolase"/>
    <property type="match status" value="1"/>
</dbReference>
<dbReference type="PRINTS" id="PR00148">
    <property type="entry name" value="ENOLASE"/>
</dbReference>
<dbReference type="SFLD" id="SFLDF00002">
    <property type="entry name" value="enolase"/>
    <property type="match status" value="1"/>
</dbReference>
<dbReference type="SFLD" id="SFLDG00178">
    <property type="entry name" value="enolase"/>
    <property type="match status" value="1"/>
</dbReference>
<dbReference type="SMART" id="SM01192">
    <property type="entry name" value="Enolase_C"/>
    <property type="match status" value="1"/>
</dbReference>
<dbReference type="SMART" id="SM01193">
    <property type="entry name" value="Enolase_N"/>
    <property type="match status" value="1"/>
</dbReference>
<dbReference type="SUPFAM" id="SSF51604">
    <property type="entry name" value="Enolase C-terminal domain-like"/>
    <property type="match status" value="1"/>
</dbReference>
<dbReference type="SUPFAM" id="SSF54826">
    <property type="entry name" value="Enolase N-terminal domain-like"/>
    <property type="match status" value="1"/>
</dbReference>
<dbReference type="PROSITE" id="PS00164">
    <property type="entry name" value="ENOLASE"/>
    <property type="match status" value="1"/>
</dbReference>
<keyword id="KW-0963">Cytoplasm</keyword>
<keyword id="KW-0324">Glycolysis</keyword>
<keyword id="KW-0456">Lyase</keyword>
<keyword id="KW-0460">Magnesium</keyword>
<keyword id="KW-0479">Metal-binding</keyword>
<keyword id="KW-0964">Secreted</keyword>
<name>ENO_PAEAT</name>
<organism>
    <name type="scientific">Paenarthrobacter aurescens (strain TC1)</name>
    <dbReference type="NCBI Taxonomy" id="290340"/>
    <lineage>
        <taxon>Bacteria</taxon>
        <taxon>Bacillati</taxon>
        <taxon>Actinomycetota</taxon>
        <taxon>Actinomycetes</taxon>
        <taxon>Micrococcales</taxon>
        <taxon>Micrococcaceae</taxon>
        <taxon>Paenarthrobacter</taxon>
    </lineage>
</organism>